<comment type="function">
    <text evidence="1">Catalyzes the attachment of valine to tRNA(Val). As ValRS can inadvertently accommodate and process structurally similar amino acids such as threonine, to avoid such errors, it has a 'posttransfer' editing activity that hydrolyzes mischarged Thr-tRNA(Val) in a tRNA-dependent manner.</text>
</comment>
<comment type="catalytic activity">
    <reaction evidence="1">
        <text>tRNA(Val) + L-valine + ATP = L-valyl-tRNA(Val) + AMP + diphosphate</text>
        <dbReference type="Rhea" id="RHEA:10704"/>
        <dbReference type="Rhea" id="RHEA-COMP:9672"/>
        <dbReference type="Rhea" id="RHEA-COMP:9708"/>
        <dbReference type="ChEBI" id="CHEBI:30616"/>
        <dbReference type="ChEBI" id="CHEBI:33019"/>
        <dbReference type="ChEBI" id="CHEBI:57762"/>
        <dbReference type="ChEBI" id="CHEBI:78442"/>
        <dbReference type="ChEBI" id="CHEBI:78537"/>
        <dbReference type="ChEBI" id="CHEBI:456215"/>
        <dbReference type="EC" id="6.1.1.9"/>
    </reaction>
</comment>
<comment type="subunit">
    <text evidence="1">Monomer.</text>
</comment>
<comment type="subcellular location">
    <subcellularLocation>
        <location evidence="1">Cytoplasm</location>
    </subcellularLocation>
</comment>
<comment type="domain">
    <text evidence="1">ValRS has two distinct active sites: one for aminoacylation and one for editing. The misactivated threonine is translocated from the active site to the editing site.</text>
</comment>
<comment type="domain">
    <text evidence="1">The C-terminal coiled-coil domain is crucial for aminoacylation activity.</text>
</comment>
<comment type="similarity">
    <text evidence="1">Belongs to the class-I aminoacyl-tRNA synthetase family. ValS type 1 subfamily.</text>
</comment>
<protein>
    <recommendedName>
        <fullName evidence="1">Valine--tRNA ligase</fullName>
        <ecNumber evidence="1">6.1.1.9</ecNumber>
    </recommendedName>
    <alternativeName>
        <fullName evidence="1">Valyl-tRNA synthetase</fullName>
        <shortName evidence="1">ValRS</shortName>
    </alternativeName>
</protein>
<gene>
    <name evidence="1" type="primary">valS</name>
    <name type="ordered locus">Sca_1269</name>
</gene>
<evidence type="ECO:0000255" key="1">
    <source>
        <dbReference type="HAMAP-Rule" id="MF_02004"/>
    </source>
</evidence>
<reference key="1">
    <citation type="journal article" date="2009" name="Appl. Environ. Microbiol.">
        <title>Genome analysis of the meat starter culture bacterium Staphylococcus carnosus TM300.</title>
        <authorList>
            <person name="Rosenstein R."/>
            <person name="Nerz C."/>
            <person name="Biswas L."/>
            <person name="Resch A."/>
            <person name="Raddatz G."/>
            <person name="Schuster S.C."/>
            <person name="Goetz F."/>
        </authorList>
    </citation>
    <scope>NUCLEOTIDE SEQUENCE [LARGE SCALE GENOMIC DNA]</scope>
    <source>
        <strain>TM300</strain>
    </source>
</reference>
<proteinExistence type="inferred from homology"/>
<name>SYV_STACT</name>
<accession>B9DND4</accession>
<organism>
    <name type="scientific">Staphylococcus carnosus (strain TM300)</name>
    <dbReference type="NCBI Taxonomy" id="396513"/>
    <lineage>
        <taxon>Bacteria</taxon>
        <taxon>Bacillati</taxon>
        <taxon>Bacillota</taxon>
        <taxon>Bacilli</taxon>
        <taxon>Bacillales</taxon>
        <taxon>Staphylococcaceae</taxon>
        <taxon>Staphylococcus</taxon>
    </lineage>
</organism>
<keyword id="KW-0030">Aminoacyl-tRNA synthetase</keyword>
<keyword id="KW-0067">ATP-binding</keyword>
<keyword id="KW-0175">Coiled coil</keyword>
<keyword id="KW-0963">Cytoplasm</keyword>
<keyword id="KW-0436">Ligase</keyword>
<keyword id="KW-0547">Nucleotide-binding</keyword>
<keyword id="KW-0648">Protein biosynthesis</keyword>
<keyword id="KW-1185">Reference proteome</keyword>
<dbReference type="EC" id="6.1.1.9" evidence="1"/>
<dbReference type="EMBL" id="AM295250">
    <property type="protein sequence ID" value="CAL28175.1"/>
    <property type="molecule type" value="Genomic_DNA"/>
</dbReference>
<dbReference type="RefSeq" id="WP_015900515.1">
    <property type="nucleotide sequence ID" value="NC_012121.1"/>
</dbReference>
<dbReference type="SMR" id="B9DND4"/>
<dbReference type="KEGG" id="sca:SCA_1269"/>
<dbReference type="eggNOG" id="COG0525">
    <property type="taxonomic scope" value="Bacteria"/>
</dbReference>
<dbReference type="HOGENOM" id="CLU_001493_0_2_9"/>
<dbReference type="OrthoDB" id="9810365at2"/>
<dbReference type="BioCyc" id="SCAR396513:SCA_RS06330-MONOMER"/>
<dbReference type="Proteomes" id="UP000000444">
    <property type="component" value="Chromosome"/>
</dbReference>
<dbReference type="GO" id="GO:0005829">
    <property type="term" value="C:cytosol"/>
    <property type="evidence" value="ECO:0007669"/>
    <property type="project" value="TreeGrafter"/>
</dbReference>
<dbReference type="GO" id="GO:0002161">
    <property type="term" value="F:aminoacyl-tRNA deacylase activity"/>
    <property type="evidence" value="ECO:0007669"/>
    <property type="project" value="InterPro"/>
</dbReference>
<dbReference type="GO" id="GO:0005524">
    <property type="term" value="F:ATP binding"/>
    <property type="evidence" value="ECO:0007669"/>
    <property type="project" value="UniProtKB-UniRule"/>
</dbReference>
<dbReference type="GO" id="GO:0004832">
    <property type="term" value="F:valine-tRNA ligase activity"/>
    <property type="evidence" value="ECO:0007669"/>
    <property type="project" value="UniProtKB-UniRule"/>
</dbReference>
<dbReference type="GO" id="GO:0006438">
    <property type="term" value="P:valyl-tRNA aminoacylation"/>
    <property type="evidence" value="ECO:0007669"/>
    <property type="project" value="UniProtKB-UniRule"/>
</dbReference>
<dbReference type="CDD" id="cd07962">
    <property type="entry name" value="Anticodon_Ia_Val"/>
    <property type="match status" value="1"/>
</dbReference>
<dbReference type="CDD" id="cd00817">
    <property type="entry name" value="ValRS_core"/>
    <property type="match status" value="1"/>
</dbReference>
<dbReference type="FunFam" id="1.10.287.380:FF:000001">
    <property type="entry name" value="Valine--tRNA ligase"/>
    <property type="match status" value="1"/>
</dbReference>
<dbReference type="FunFam" id="1.10.730.10:FF:000014">
    <property type="entry name" value="Valine--tRNA ligase"/>
    <property type="match status" value="1"/>
</dbReference>
<dbReference type="FunFam" id="3.40.50.620:FF:000032">
    <property type="entry name" value="Valine--tRNA ligase"/>
    <property type="match status" value="1"/>
</dbReference>
<dbReference type="FunFam" id="3.40.50.620:FF:000098">
    <property type="entry name" value="Valine--tRNA ligase"/>
    <property type="match status" value="1"/>
</dbReference>
<dbReference type="FunFam" id="3.90.740.10:FF:000005">
    <property type="entry name" value="Valine--tRNA ligase, mitochondrial"/>
    <property type="match status" value="1"/>
</dbReference>
<dbReference type="Gene3D" id="3.40.50.620">
    <property type="entry name" value="HUPs"/>
    <property type="match status" value="2"/>
</dbReference>
<dbReference type="Gene3D" id="1.10.730.10">
    <property type="entry name" value="Isoleucyl-tRNA Synthetase, Domain 1"/>
    <property type="match status" value="1"/>
</dbReference>
<dbReference type="Gene3D" id="1.10.287.380">
    <property type="entry name" value="Valyl-tRNA synthetase, C-terminal domain"/>
    <property type="match status" value="1"/>
</dbReference>
<dbReference type="Gene3D" id="3.90.740.10">
    <property type="entry name" value="Valyl/Leucyl/Isoleucyl-tRNA synthetase, editing domain"/>
    <property type="match status" value="1"/>
</dbReference>
<dbReference type="HAMAP" id="MF_02004">
    <property type="entry name" value="Val_tRNA_synth_type1"/>
    <property type="match status" value="1"/>
</dbReference>
<dbReference type="InterPro" id="IPR001412">
    <property type="entry name" value="aa-tRNA-synth_I_CS"/>
</dbReference>
<dbReference type="InterPro" id="IPR002300">
    <property type="entry name" value="aa-tRNA-synth_Ia"/>
</dbReference>
<dbReference type="InterPro" id="IPR033705">
    <property type="entry name" value="Anticodon_Ia_Val"/>
</dbReference>
<dbReference type="InterPro" id="IPR013155">
    <property type="entry name" value="M/V/L/I-tRNA-synth_anticd-bd"/>
</dbReference>
<dbReference type="InterPro" id="IPR014729">
    <property type="entry name" value="Rossmann-like_a/b/a_fold"/>
</dbReference>
<dbReference type="InterPro" id="IPR010978">
    <property type="entry name" value="tRNA-bd_arm"/>
</dbReference>
<dbReference type="InterPro" id="IPR009080">
    <property type="entry name" value="tRNAsynth_Ia_anticodon-bd"/>
</dbReference>
<dbReference type="InterPro" id="IPR037118">
    <property type="entry name" value="Val-tRNA_synth_C_sf"/>
</dbReference>
<dbReference type="InterPro" id="IPR019499">
    <property type="entry name" value="Val-tRNA_synth_tRNA-bd"/>
</dbReference>
<dbReference type="InterPro" id="IPR009008">
    <property type="entry name" value="Val/Leu/Ile-tRNA-synth_edit"/>
</dbReference>
<dbReference type="InterPro" id="IPR002303">
    <property type="entry name" value="Valyl-tRNA_ligase"/>
</dbReference>
<dbReference type="NCBIfam" id="NF004349">
    <property type="entry name" value="PRK05729.1"/>
    <property type="match status" value="1"/>
</dbReference>
<dbReference type="NCBIfam" id="TIGR00422">
    <property type="entry name" value="valS"/>
    <property type="match status" value="1"/>
</dbReference>
<dbReference type="PANTHER" id="PTHR11946:SF93">
    <property type="entry name" value="VALINE--TRNA LIGASE, CHLOROPLASTIC_MITOCHONDRIAL 2"/>
    <property type="match status" value="1"/>
</dbReference>
<dbReference type="PANTHER" id="PTHR11946">
    <property type="entry name" value="VALYL-TRNA SYNTHETASES"/>
    <property type="match status" value="1"/>
</dbReference>
<dbReference type="Pfam" id="PF08264">
    <property type="entry name" value="Anticodon_1"/>
    <property type="match status" value="1"/>
</dbReference>
<dbReference type="Pfam" id="PF00133">
    <property type="entry name" value="tRNA-synt_1"/>
    <property type="match status" value="1"/>
</dbReference>
<dbReference type="Pfam" id="PF10458">
    <property type="entry name" value="Val_tRNA-synt_C"/>
    <property type="match status" value="1"/>
</dbReference>
<dbReference type="PRINTS" id="PR00986">
    <property type="entry name" value="TRNASYNTHVAL"/>
</dbReference>
<dbReference type="SUPFAM" id="SSF47323">
    <property type="entry name" value="Anticodon-binding domain of a subclass of class I aminoacyl-tRNA synthetases"/>
    <property type="match status" value="1"/>
</dbReference>
<dbReference type="SUPFAM" id="SSF52374">
    <property type="entry name" value="Nucleotidylyl transferase"/>
    <property type="match status" value="1"/>
</dbReference>
<dbReference type="SUPFAM" id="SSF46589">
    <property type="entry name" value="tRNA-binding arm"/>
    <property type="match status" value="1"/>
</dbReference>
<dbReference type="SUPFAM" id="SSF50677">
    <property type="entry name" value="ValRS/IleRS/LeuRS editing domain"/>
    <property type="match status" value="1"/>
</dbReference>
<dbReference type="PROSITE" id="PS00178">
    <property type="entry name" value="AA_TRNA_LIGASE_I"/>
    <property type="match status" value="1"/>
</dbReference>
<sequence length="876" mass="101834">MEMKPKYNPTEVEAGRYQEWVEKGYFRPSGDKSKETYTIVIPPPNVTGKLHLGHAWDTTLQDILTRMKRMQGYDTLYLPGMDHAGIATQAKVEAKLNEQGISRHDIGREKFLEEVWSWKDEYASFIRQQWAKLGLGLDYDRERFTLDEGLSKAVRKVFVDMYNKGLIYRGERIINWDPEARTALSDIEVVHEDVEGKFYHFKYPYADGEGYIEIATTRPETMLGDTAIVVNPDDERYKDVIGKKVILPIVNRELPILADEYVDVEFGSGAMKVTPAHDPNDFEIGQRHNLESIIVMDEEGKMNDKAGKYEGMDRFECRAQLVEDLKEQDLVIKIEDHVHAVGHSERTGAVVEPYLSTQWFVNMEPLAKQALDNQKTDNRINFVPERFEHTFNQWMENIRDWTISRQLWWGHQIPAWYHKETGEIYVGETEPEDAENWVQDEDVLDTWFSSGLWPFSTLGWPDVESEDYQRYYPTNALVTGYDIIFFWVARMIFQGLEFTGERPFDDVLLHGLVRAEDGRKMSKSLGNGVDPMDVINEYGADSLRYFLATGSSPGHDLRYSTEKVESVWNFINKIWNAARFSIMNIGEEFKFEDIDLSKNLSLADKWILTRLNETIKTVTDLSDRYEFGEVGRALYNFIWDEFCDWYIEMSKIPMNGEDEAQKQVTRSVLSYVLERTMRMLHPYMPFVTEEIWQNLPHVGETIVTSAWPEVEEAYMFEESKQAMQYVVEIIKAVRQARSEVNTPLSKAIPIYIKTKDAEIKQMLDENQHYLERFGHPSELVISTDIETPDKAMTSVVGAGEVILPLEGLIDMDKEIARLEKEIDKWQSELDRVDKKLSNENFVNKAPEKIINEEKAKKHDYQEKFDSVKARIEQLKA</sequence>
<feature type="chain" id="PRO_1000189244" description="Valine--tRNA ligase">
    <location>
        <begin position="1"/>
        <end position="876"/>
    </location>
</feature>
<feature type="coiled-coil region" evidence="1">
    <location>
        <begin position="805"/>
        <end position="876"/>
    </location>
</feature>
<feature type="short sequence motif" description="'HIGH' region">
    <location>
        <begin position="44"/>
        <end position="54"/>
    </location>
</feature>
<feature type="short sequence motif" description="'KMSKS' region">
    <location>
        <begin position="520"/>
        <end position="524"/>
    </location>
</feature>
<feature type="binding site" evidence="1">
    <location>
        <position position="523"/>
    </location>
    <ligand>
        <name>ATP</name>
        <dbReference type="ChEBI" id="CHEBI:30616"/>
    </ligand>
</feature>